<organism>
    <name type="scientific">Aromatoleum aromaticum (strain DSM 19018 / LMG 30748 / EbN1)</name>
    <name type="common">Azoarcus sp. (strain EbN1)</name>
    <dbReference type="NCBI Taxonomy" id="76114"/>
    <lineage>
        <taxon>Bacteria</taxon>
        <taxon>Pseudomonadati</taxon>
        <taxon>Pseudomonadota</taxon>
        <taxon>Betaproteobacteria</taxon>
        <taxon>Rhodocyclales</taxon>
        <taxon>Rhodocyclaceae</taxon>
        <taxon>Aromatoleum</taxon>
    </lineage>
</organism>
<keyword id="KW-0413">Isomerase</keyword>
<keyword id="KW-1185">Reference proteome</keyword>
<keyword id="KW-0819">tRNA processing</keyword>
<protein>
    <recommendedName>
        <fullName evidence="1">tRNA pseudouridine synthase A</fullName>
        <ecNumber evidence="1">5.4.99.12</ecNumber>
    </recommendedName>
    <alternativeName>
        <fullName evidence="1">tRNA pseudouridine(38-40) synthase</fullName>
    </alternativeName>
    <alternativeName>
        <fullName evidence="1">tRNA pseudouridylate synthase I</fullName>
    </alternativeName>
    <alternativeName>
        <fullName evidence="1">tRNA-uridine isomerase I</fullName>
    </alternativeName>
</protein>
<proteinExistence type="inferred from homology"/>
<feature type="chain" id="PRO_0000057318" description="tRNA pseudouridine synthase A">
    <location>
        <begin position="1"/>
        <end position="264"/>
    </location>
</feature>
<feature type="active site" description="Nucleophile" evidence="1">
    <location>
        <position position="51"/>
    </location>
</feature>
<feature type="binding site" evidence="1">
    <location>
        <position position="109"/>
    </location>
    <ligand>
        <name>substrate</name>
    </ligand>
</feature>
<comment type="function">
    <text evidence="1">Formation of pseudouridine at positions 38, 39 and 40 in the anticodon stem and loop of transfer RNAs.</text>
</comment>
<comment type="catalytic activity">
    <reaction evidence="1">
        <text>uridine(38/39/40) in tRNA = pseudouridine(38/39/40) in tRNA</text>
        <dbReference type="Rhea" id="RHEA:22376"/>
        <dbReference type="Rhea" id="RHEA-COMP:10085"/>
        <dbReference type="Rhea" id="RHEA-COMP:10087"/>
        <dbReference type="ChEBI" id="CHEBI:65314"/>
        <dbReference type="ChEBI" id="CHEBI:65315"/>
        <dbReference type="EC" id="5.4.99.12"/>
    </reaction>
</comment>
<comment type="subunit">
    <text evidence="1">Homodimer.</text>
</comment>
<comment type="similarity">
    <text evidence="1">Belongs to the tRNA pseudouridine synthase TruA family.</text>
</comment>
<dbReference type="EC" id="5.4.99.12" evidence="1"/>
<dbReference type="EMBL" id="CR555306">
    <property type="protein sequence ID" value="CAI08822.1"/>
    <property type="molecule type" value="Genomic_DNA"/>
</dbReference>
<dbReference type="RefSeq" id="WP_011238505.1">
    <property type="nucleotide sequence ID" value="NC_006513.1"/>
</dbReference>
<dbReference type="SMR" id="Q5P1J2"/>
<dbReference type="STRING" id="76114.ebA4770"/>
<dbReference type="KEGG" id="eba:ebA4770"/>
<dbReference type="eggNOG" id="COG0101">
    <property type="taxonomic scope" value="Bacteria"/>
</dbReference>
<dbReference type="HOGENOM" id="CLU_014673_0_2_4"/>
<dbReference type="OrthoDB" id="9811823at2"/>
<dbReference type="Proteomes" id="UP000006552">
    <property type="component" value="Chromosome"/>
</dbReference>
<dbReference type="GO" id="GO:0003723">
    <property type="term" value="F:RNA binding"/>
    <property type="evidence" value="ECO:0007669"/>
    <property type="project" value="InterPro"/>
</dbReference>
<dbReference type="GO" id="GO:0160147">
    <property type="term" value="F:tRNA pseudouridine(38-40) synthase activity"/>
    <property type="evidence" value="ECO:0007669"/>
    <property type="project" value="UniProtKB-EC"/>
</dbReference>
<dbReference type="GO" id="GO:0031119">
    <property type="term" value="P:tRNA pseudouridine synthesis"/>
    <property type="evidence" value="ECO:0007669"/>
    <property type="project" value="UniProtKB-UniRule"/>
</dbReference>
<dbReference type="CDD" id="cd02570">
    <property type="entry name" value="PseudoU_synth_EcTruA"/>
    <property type="match status" value="1"/>
</dbReference>
<dbReference type="FunFam" id="3.30.70.580:FF:000001">
    <property type="entry name" value="tRNA pseudouridine synthase A"/>
    <property type="match status" value="1"/>
</dbReference>
<dbReference type="Gene3D" id="3.30.70.660">
    <property type="entry name" value="Pseudouridine synthase I, catalytic domain, C-terminal subdomain"/>
    <property type="match status" value="1"/>
</dbReference>
<dbReference type="Gene3D" id="3.30.70.580">
    <property type="entry name" value="Pseudouridine synthase I, catalytic domain, N-terminal subdomain"/>
    <property type="match status" value="1"/>
</dbReference>
<dbReference type="HAMAP" id="MF_00171">
    <property type="entry name" value="TruA"/>
    <property type="match status" value="1"/>
</dbReference>
<dbReference type="InterPro" id="IPR020103">
    <property type="entry name" value="PsdUridine_synth_cat_dom_sf"/>
</dbReference>
<dbReference type="InterPro" id="IPR001406">
    <property type="entry name" value="PsdUridine_synth_TruA"/>
</dbReference>
<dbReference type="InterPro" id="IPR020097">
    <property type="entry name" value="PsdUridine_synth_TruA_a/b_dom"/>
</dbReference>
<dbReference type="InterPro" id="IPR020095">
    <property type="entry name" value="PsdUridine_synth_TruA_C"/>
</dbReference>
<dbReference type="InterPro" id="IPR020094">
    <property type="entry name" value="TruA/RsuA/RluB/E/F_N"/>
</dbReference>
<dbReference type="NCBIfam" id="TIGR00071">
    <property type="entry name" value="hisT_truA"/>
    <property type="match status" value="1"/>
</dbReference>
<dbReference type="PANTHER" id="PTHR11142">
    <property type="entry name" value="PSEUDOURIDYLATE SYNTHASE"/>
    <property type="match status" value="1"/>
</dbReference>
<dbReference type="PANTHER" id="PTHR11142:SF0">
    <property type="entry name" value="TRNA PSEUDOURIDINE SYNTHASE-LIKE 1"/>
    <property type="match status" value="1"/>
</dbReference>
<dbReference type="Pfam" id="PF01416">
    <property type="entry name" value="PseudoU_synth_1"/>
    <property type="match status" value="2"/>
</dbReference>
<dbReference type="PIRSF" id="PIRSF001430">
    <property type="entry name" value="tRNA_psdUrid_synth"/>
    <property type="match status" value="1"/>
</dbReference>
<dbReference type="SUPFAM" id="SSF55120">
    <property type="entry name" value="Pseudouridine synthase"/>
    <property type="match status" value="1"/>
</dbReference>
<name>TRUA_AROAE</name>
<sequence length="264" mass="29018">MRIVLGVEYAGSAFEGFQSQAHGRTVQDHLEAAIGHIAAHPVRLHCAGRTDAGVHATAQVVHFDTESVRPNSGWVRGVNSRLSSPVVVRWATEAGDGFHARFCAVSRRYRYILHNSPVRPALLAGRVGWFHPPLDEIAMAEAARCLEGWHDFSAFRAAGCQAKSPVKLMHEVRVQRAGDYVVFDFWANAFLHHMVRNLVGALVYVGKGRHSAAWLAEVLAARDRSLAALTFSADGLYLCGVEYAPHWSLPGEGRIIVVPRIPFV</sequence>
<evidence type="ECO:0000255" key="1">
    <source>
        <dbReference type="HAMAP-Rule" id="MF_00171"/>
    </source>
</evidence>
<accession>Q5P1J2</accession>
<gene>
    <name evidence="1" type="primary">truA</name>
    <name type="ordered locus">AZOSEA26970</name>
    <name type="ORF">ebA4770</name>
</gene>
<reference key="1">
    <citation type="journal article" date="2005" name="Arch. Microbiol.">
        <title>The genome sequence of an anaerobic aromatic-degrading denitrifying bacterium, strain EbN1.</title>
        <authorList>
            <person name="Rabus R."/>
            <person name="Kube M."/>
            <person name="Heider J."/>
            <person name="Beck A."/>
            <person name="Heitmann K."/>
            <person name="Widdel F."/>
            <person name="Reinhardt R."/>
        </authorList>
    </citation>
    <scope>NUCLEOTIDE SEQUENCE [LARGE SCALE GENOMIC DNA]</scope>
    <source>
        <strain>DSM 19018 / LMG 30748 / EbN1</strain>
    </source>
</reference>